<evidence type="ECO:0000255" key="1">
    <source>
        <dbReference type="HAMAP-Rule" id="MF_01337"/>
    </source>
</evidence>
<evidence type="ECO:0000305" key="2"/>
<reference key="1">
    <citation type="journal article" date="2006" name="Appl. Environ. Microbiol.">
        <title>Complete genome sequence of the marine, chemolithoautotrophic, ammonia-oxidizing bacterium Nitrosococcus oceani ATCC 19707.</title>
        <authorList>
            <person name="Klotz M.G."/>
            <person name="Arp D.J."/>
            <person name="Chain P.S.G."/>
            <person name="El-Sheikh A.F."/>
            <person name="Hauser L.J."/>
            <person name="Hommes N.G."/>
            <person name="Larimer F.W."/>
            <person name="Malfatti S.A."/>
            <person name="Norton J.M."/>
            <person name="Poret-Peterson A.T."/>
            <person name="Vergez L.M."/>
            <person name="Ward B.B."/>
        </authorList>
    </citation>
    <scope>NUCLEOTIDE SEQUENCE [LARGE SCALE GENOMIC DNA]</scope>
    <source>
        <strain>ATCC 19707 / BCRC 17464 / JCM 30415 / NCIMB 11848 / C-107</strain>
    </source>
</reference>
<name>RL18_NITOC</name>
<accession>Q3J8T0</accession>
<dbReference type="EMBL" id="CP000127">
    <property type="protein sequence ID" value="ABA58766.1"/>
    <property type="molecule type" value="Genomic_DNA"/>
</dbReference>
<dbReference type="RefSeq" id="WP_011330917.1">
    <property type="nucleotide sequence ID" value="NC_007484.1"/>
</dbReference>
<dbReference type="SMR" id="Q3J8T0"/>
<dbReference type="FunCoup" id="Q3J8T0">
    <property type="interactions" value="643"/>
</dbReference>
<dbReference type="STRING" id="323261.Noc_2308"/>
<dbReference type="KEGG" id="noc:Noc_2308"/>
<dbReference type="eggNOG" id="COG0256">
    <property type="taxonomic scope" value="Bacteria"/>
</dbReference>
<dbReference type="HOGENOM" id="CLU_098841_0_1_6"/>
<dbReference type="InParanoid" id="Q3J8T0"/>
<dbReference type="Proteomes" id="UP000006838">
    <property type="component" value="Chromosome"/>
</dbReference>
<dbReference type="GO" id="GO:0022625">
    <property type="term" value="C:cytosolic large ribosomal subunit"/>
    <property type="evidence" value="ECO:0007669"/>
    <property type="project" value="TreeGrafter"/>
</dbReference>
<dbReference type="GO" id="GO:0008097">
    <property type="term" value="F:5S rRNA binding"/>
    <property type="evidence" value="ECO:0007669"/>
    <property type="project" value="TreeGrafter"/>
</dbReference>
<dbReference type="GO" id="GO:0003735">
    <property type="term" value="F:structural constituent of ribosome"/>
    <property type="evidence" value="ECO:0007669"/>
    <property type="project" value="InterPro"/>
</dbReference>
<dbReference type="GO" id="GO:0006412">
    <property type="term" value="P:translation"/>
    <property type="evidence" value="ECO:0007669"/>
    <property type="project" value="UniProtKB-UniRule"/>
</dbReference>
<dbReference type="CDD" id="cd00432">
    <property type="entry name" value="Ribosomal_L18_L5e"/>
    <property type="match status" value="1"/>
</dbReference>
<dbReference type="FunFam" id="3.30.420.100:FF:000001">
    <property type="entry name" value="50S ribosomal protein L18"/>
    <property type="match status" value="1"/>
</dbReference>
<dbReference type="Gene3D" id="3.30.420.100">
    <property type="match status" value="1"/>
</dbReference>
<dbReference type="HAMAP" id="MF_01337_B">
    <property type="entry name" value="Ribosomal_uL18_B"/>
    <property type="match status" value="1"/>
</dbReference>
<dbReference type="InterPro" id="IPR004389">
    <property type="entry name" value="Ribosomal_uL18_bac-type"/>
</dbReference>
<dbReference type="InterPro" id="IPR005484">
    <property type="entry name" value="Ribosomal_uL18_bac/euk"/>
</dbReference>
<dbReference type="NCBIfam" id="TIGR00060">
    <property type="entry name" value="L18_bact"/>
    <property type="match status" value="1"/>
</dbReference>
<dbReference type="PANTHER" id="PTHR12899">
    <property type="entry name" value="39S RIBOSOMAL PROTEIN L18, MITOCHONDRIAL"/>
    <property type="match status" value="1"/>
</dbReference>
<dbReference type="PANTHER" id="PTHR12899:SF3">
    <property type="entry name" value="LARGE RIBOSOMAL SUBUNIT PROTEIN UL18M"/>
    <property type="match status" value="1"/>
</dbReference>
<dbReference type="Pfam" id="PF00861">
    <property type="entry name" value="Ribosomal_L18p"/>
    <property type="match status" value="1"/>
</dbReference>
<dbReference type="SUPFAM" id="SSF53137">
    <property type="entry name" value="Translational machinery components"/>
    <property type="match status" value="1"/>
</dbReference>
<gene>
    <name evidence="1" type="primary">rplR</name>
    <name type="ordered locus">Noc_2308</name>
</gene>
<comment type="function">
    <text evidence="1">This is one of the proteins that bind and probably mediate the attachment of the 5S RNA into the large ribosomal subunit, where it forms part of the central protuberance.</text>
</comment>
<comment type="subunit">
    <text evidence="1">Part of the 50S ribosomal subunit; part of the 5S rRNA/L5/L18/L25 subcomplex. Contacts the 5S and 23S rRNAs.</text>
</comment>
<comment type="similarity">
    <text evidence="1">Belongs to the universal ribosomal protein uL18 family.</text>
</comment>
<sequence>MDKKTARLRRAAKTRHKIHELGVVRLTVHRTPKHIYVQIIKPADGNVVASASTVESMLKQQLKNTGNKEAAITVGKTIAERAKAKGIAKVAFDRSGYKYHGRVKALADAAREGGLQF</sequence>
<protein>
    <recommendedName>
        <fullName evidence="1">Large ribosomal subunit protein uL18</fullName>
    </recommendedName>
    <alternativeName>
        <fullName evidence="2">50S ribosomal protein L18</fullName>
    </alternativeName>
</protein>
<keyword id="KW-1185">Reference proteome</keyword>
<keyword id="KW-0687">Ribonucleoprotein</keyword>
<keyword id="KW-0689">Ribosomal protein</keyword>
<keyword id="KW-0694">RNA-binding</keyword>
<keyword id="KW-0699">rRNA-binding</keyword>
<organism>
    <name type="scientific">Nitrosococcus oceani (strain ATCC 19707 / BCRC 17464 / JCM 30415 / NCIMB 11848 / C-107)</name>
    <dbReference type="NCBI Taxonomy" id="323261"/>
    <lineage>
        <taxon>Bacteria</taxon>
        <taxon>Pseudomonadati</taxon>
        <taxon>Pseudomonadota</taxon>
        <taxon>Gammaproteobacteria</taxon>
        <taxon>Chromatiales</taxon>
        <taxon>Chromatiaceae</taxon>
        <taxon>Nitrosococcus</taxon>
    </lineage>
</organism>
<proteinExistence type="inferred from homology"/>
<feature type="chain" id="PRO_0000251336" description="Large ribosomal subunit protein uL18">
    <location>
        <begin position="1"/>
        <end position="117"/>
    </location>
</feature>